<organism>
    <name type="scientific">Xanthomonas oryzae pv. oryzae (strain KACC10331 / KXO85)</name>
    <dbReference type="NCBI Taxonomy" id="291331"/>
    <lineage>
        <taxon>Bacteria</taxon>
        <taxon>Pseudomonadati</taxon>
        <taxon>Pseudomonadota</taxon>
        <taxon>Gammaproteobacteria</taxon>
        <taxon>Lysobacterales</taxon>
        <taxon>Lysobacteraceae</taxon>
        <taxon>Xanthomonas</taxon>
    </lineage>
</organism>
<accession>Q5H2Z1</accession>
<evidence type="ECO:0000255" key="1">
    <source>
        <dbReference type="HAMAP-Rule" id="MF_00651"/>
    </source>
</evidence>
<evidence type="ECO:0000305" key="2"/>
<gene>
    <name type="ordered locus">XOO1426</name>
</gene>
<name>YQGF_XANOR</name>
<proteinExistence type="inferred from homology"/>
<comment type="function">
    <text evidence="1">Could be a nuclease involved in processing of the 5'-end of pre-16S rRNA.</text>
</comment>
<comment type="subcellular location">
    <subcellularLocation>
        <location evidence="1">Cytoplasm</location>
    </subcellularLocation>
</comment>
<comment type="similarity">
    <text evidence="1">Belongs to the YqgF nuclease family.</text>
</comment>
<comment type="sequence caution" evidence="2">
    <conflict type="erroneous initiation">
        <sequence resource="EMBL-CDS" id="AAW74680"/>
    </conflict>
    <text>Extended N-terminus.</text>
</comment>
<dbReference type="EC" id="3.1.-.-" evidence="1"/>
<dbReference type="EMBL" id="AE013598">
    <property type="protein sequence ID" value="AAW74680.1"/>
    <property type="status" value="ALT_INIT"/>
    <property type="molecule type" value="Genomic_DNA"/>
</dbReference>
<dbReference type="SMR" id="Q5H2Z1"/>
<dbReference type="STRING" id="291331.XOO1426"/>
<dbReference type="KEGG" id="xoo:XOO1426"/>
<dbReference type="HOGENOM" id="CLU_098240_3_2_6"/>
<dbReference type="Proteomes" id="UP000006735">
    <property type="component" value="Chromosome"/>
</dbReference>
<dbReference type="GO" id="GO:0005829">
    <property type="term" value="C:cytosol"/>
    <property type="evidence" value="ECO:0007669"/>
    <property type="project" value="TreeGrafter"/>
</dbReference>
<dbReference type="GO" id="GO:0004518">
    <property type="term" value="F:nuclease activity"/>
    <property type="evidence" value="ECO:0007669"/>
    <property type="project" value="UniProtKB-KW"/>
</dbReference>
<dbReference type="GO" id="GO:0000967">
    <property type="term" value="P:rRNA 5'-end processing"/>
    <property type="evidence" value="ECO:0007669"/>
    <property type="project" value="UniProtKB-UniRule"/>
</dbReference>
<dbReference type="CDD" id="cd16964">
    <property type="entry name" value="YqgF"/>
    <property type="match status" value="1"/>
</dbReference>
<dbReference type="FunFam" id="3.30.420.140:FF:000010">
    <property type="entry name" value="Putative pre-16S rRNA nuclease"/>
    <property type="match status" value="1"/>
</dbReference>
<dbReference type="Gene3D" id="3.30.420.140">
    <property type="entry name" value="YqgF/RNase H-like domain"/>
    <property type="match status" value="1"/>
</dbReference>
<dbReference type="HAMAP" id="MF_00651">
    <property type="entry name" value="Nuclease_YqgF"/>
    <property type="match status" value="1"/>
</dbReference>
<dbReference type="InterPro" id="IPR012337">
    <property type="entry name" value="RNaseH-like_sf"/>
</dbReference>
<dbReference type="InterPro" id="IPR005227">
    <property type="entry name" value="YqgF"/>
</dbReference>
<dbReference type="InterPro" id="IPR006641">
    <property type="entry name" value="YqgF/RNaseH-like_dom"/>
</dbReference>
<dbReference type="InterPro" id="IPR037027">
    <property type="entry name" value="YqgF/RNaseH-like_dom_sf"/>
</dbReference>
<dbReference type="NCBIfam" id="TIGR00250">
    <property type="entry name" value="RNAse_H_YqgF"/>
    <property type="match status" value="1"/>
</dbReference>
<dbReference type="PANTHER" id="PTHR33317">
    <property type="entry name" value="POLYNUCLEOTIDYL TRANSFERASE, RIBONUCLEASE H-LIKE SUPERFAMILY PROTEIN"/>
    <property type="match status" value="1"/>
</dbReference>
<dbReference type="PANTHER" id="PTHR33317:SF4">
    <property type="entry name" value="POLYNUCLEOTIDYL TRANSFERASE, RIBONUCLEASE H-LIKE SUPERFAMILY PROTEIN"/>
    <property type="match status" value="1"/>
</dbReference>
<dbReference type="Pfam" id="PF03652">
    <property type="entry name" value="RuvX"/>
    <property type="match status" value="1"/>
</dbReference>
<dbReference type="SMART" id="SM00732">
    <property type="entry name" value="YqgFc"/>
    <property type="match status" value="1"/>
</dbReference>
<dbReference type="SUPFAM" id="SSF53098">
    <property type="entry name" value="Ribonuclease H-like"/>
    <property type="match status" value="1"/>
</dbReference>
<keyword id="KW-0963">Cytoplasm</keyword>
<keyword id="KW-0378">Hydrolase</keyword>
<keyword id="KW-0540">Nuclease</keyword>
<keyword id="KW-1185">Reference proteome</keyword>
<keyword id="KW-0690">Ribosome biogenesis</keyword>
<protein>
    <recommendedName>
        <fullName evidence="1">Putative pre-16S rRNA nuclease</fullName>
        <ecNumber evidence="1">3.1.-.-</ecNumber>
    </recommendedName>
</protein>
<feature type="chain" id="PRO_0000172178" description="Putative pre-16S rRNA nuclease">
    <location>
        <begin position="1"/>
        <end position="155"/>
    </location>
</feature>
<sequence length="155" mass="16769">MPEAGAILPDGTVLGFDVGSRRIGVAVGTALGAGARAVAVINVHASGPDWDALDRVHKEWRPDGLVVGDPLTLDDKHQPARKRAHAFARQLRERYALPVVLIDERSSSVEAAQRFARERADGRKRRRDAEALDAMAAAVIVERWLAAPDQATLLP</sequence>
<reference key="1">
    <citation type="journal article" date="2005" name="Nucleic Acids Res.">
        <title>The genome sequence of Xanthomonas oryzae pathovar oryzae KACC10331, the bacterial blight pathogen of rice.</title>
        <authorList>
            <person name="Lee B.-M."/>
            <person name="Park Y.-J."/>
            <person name="Park D.-S."/>
            <person name="Kang H.-W."/>
            <person name="Kim J.-G."/>
            <person name="Song E.-S."/>
            <person name="Park I.-C."/>
            <person name="Yoon U.-H."/>
            <person name="Hahn J.-H."/>
            <person name="Koo B.-S."/>
            <person name="Lee G.-B."/>
            <person name="Kim H."/>
            <person name="Park H.-S."/>
            <person name="Yoon K.-O."/>
            <person name="Kim J.-H."/>
            <person name="Jung C.-H."/>
            <person name="Koh N.-H."/>
            <person name="Seo J.-S."/>
            <person name="Go S.-J."/>
        </authorList>
    </citation>
    <scope>NUCLEOTIDE SEQUENCE [LARGE SCALE GENOMIC DNA]</scope>
    <source>
        <strain>KACC10331 / KXO85</strain>
    </source>
</reference>